<protein>
    <recommendedName>
        <fullName>Cytochrome c oxidase subunit 7C, mitochondrial</fullName>
    </recommendedName>
    <alternativeName>
        <fullName>Cytochrome c oxidase polypeptide VIIc</fullName>
    </alternativeName>
</protein>
<comment type="function">
    <text evidence="2">Component of the cytochrome c oxidase, the last enzyme in the mitochondrial electron transport chain which drives oxidative phosphorylation. The respiratory chain contains 3 multisubunit complexes succinate dehydrogenase (complex II, CII), ubiquinol-cytochrome c oxidoreductase (cytochrome b-c1 complex, complex III, CIII) and cytochrome c oxidase (complex IV, CIV), that cooperate to transfer electrons derived from NADH and succinate to molecular oxygen, creating an electrochemical gradient over the inner membrane that drives transmembrane transport and the ATP synthase. Cytochrome c oxidase is the component of the respiratory chain that catalyzes the reduction of oxygen to water. Electrons originating from reduced cytochrome c in the intermembrane space (IMS) are transferred via the dinuclear copper A center (CU(A)) of subunit 2 and heme A of subunit 1 to the active site in subunit 1, a binuclear center (BNC) formed by heme A3 and copper B (CU(B)). The BNC reduces molecular oxygen to 2 water molecules using 4 electrons from cytochrome c in the IMS and 4 protons from the mitochondrial matrix.</text>
</comment>
<comment type="pathway">
    <text evidence="2">Energy metabolism; oxidative phosphorylation.</text>
</comment>
<comment type="subunit">
    <text evidence="1 3">Component of the cytochrome c oxidase (complex IV, CIV), a multisubunit enzyme composed of 14 subunits. The complex is composed of a catalytic core of 3 subunits MT-CO1, MT-CO2 and MT-CO3, encoded in the mitochondrial DNA, and 11 supernumerary subunits COX4I, COX5A, COX5B, COX6A, COX6B, COX6C, COX7A, COX7B, COX7C, COX8 and NDUFA4, which are encoded in the nuclear genome. The complex exists as a monomer or a dimer and forms supercomplexes (SCs) in the inner mitochondrial membrane with NADH-ubiquinone oxidoreductase (complex I, CI) and ubiquinol-cytochrome c oxidoreductase (cytochrome b-c1 complex, complex III, CIII), resulting in different assemblies (supercomplex SCI(1)III(2)IV(1) and megacomplex MCI(2)III(2)IV(2)) (By similarity). Interacts with RAB5IF (By similarity).</text>
</comment>
<comment type="subcellular location">
    <subcellularLocation>
        <location evidence="1">Mitochondrion inner membrane</location>
        <topology evidence="1">Single-pass membrane protein</topology>
    </subcellularLocation>
</comment>
<comment type="similarity">
    <text evidence="5">Belongs to the cytochrome c oxidase VIIc family.</text>
</comment>
<sequence length="63" mass="7336">MLGHSIRRFTTSVVRRSHYEEGPGKNLPFSVENKWTLLVKMCLFFGSAFSVPFLIVRHQLLKQ</sequence>
<dbReference type="EMBL" id="AB072020">
    <property type="protein sequence ID" value="BAB86809.1"/>
    <property type="molecule type" value="mRNA"/>
</dbReference>
<dbReference type="SMR" id="Q8SPI1"/>
<dbReference type="STRING" id="9541.ENSMFAP00000009630"/>
<dbReference type="Ensembl" id="ENSMFAT00000035642.2">
    <property type="protein sequence ID" value="ENSMFAP00000009630.1"/>
    <property type="gene ID" value="ENSMFAG00000035190.2"/>
</dbReference>
<dbReference type="VEuPathDB" id="HostDB:ENSMFAG00000035190"/>
<dbReference type="GeneTree" id="ENSGT00390000018086"/>
<dbReference type="OMA" id="FLVLRYH"/>
<dbReference type="UniPathway" id="UPA00705"/>
<dbReference type="Proteomes" id="UP000233100">
    <property type="component" value="Chromosome 6"/>
</dbReference>
<dbReference type="Bgee" id="ENSMFAG00000035190">
    <property type="expression patterns" value="Expressed in heart and 13 other cell types or tissues"/>
</dbReference>
<dbReference type="GO" id="GO:0005743">
    <property type="term" value="C:mitochondrial inner membrane"/>
    <property type="evidence" value="ECO:0007669"/>
    <property type="project" value="UniProtKB-SubCell"/>
</dbReference>
<dbReference type="GO" id="GO:0045277">
    <property type="term" value="C:respiratory chain complex IV"/>
    <property type="evidence" value="ECO:0007669"/>
    <property type="project" value="Ensembl"/>
</dbReference>
<dbReference type="GO" id="GO:0006123">
    <property type="term" value="P:mitochondrial electron transport, cytochrome c to oxygen"/>
    <property type="evidence" value="ECO:0007669"/>
    <property type="project" value="InterPro"/>
</dbReference>
<dbReference type="CDD" id="cd00929">
    <property type="entry name" value="Cyt_c_Oxidase_VIIc"/>
    <property type="match status" value="1"/>
</dbReference>
<dbReference type="FunFam" id="4.10.49.10:FF:000001">
    <property type="entry name" value="Cytochrome c oxidase subunit 7C"/>
    <property type="match status" value="1"/>
</dbReference>
<dbReference type="Gene3D" id="4.10.49.10">
    <property type="entry name" value="Cytochrome c oxidase subunit VIIc"/>
    <property type="match status" value="1"/>
</dbReference>
<dbReference type="InterPro" id="IPR004202">
    <property type="entry name" value="COX7C/Cox8"/>
</dbReference>
<dbReference type="InterPro" id="IPR036636">
    <property type="entry name" value="COX7C/Cox8_sf"/>
</dbReference>
<dbReference type="PANTHER" id="PTHR13313:SF0">
    <property type="entry name" value="CYTOCHROME C OXIDASE SUBUNIT 7C, MITOCHONDRIAL"/>
    <property type="match status" value="1"/>
</dbReference>
<dbReference type="PANTHER" id="PTHR13313">
    <property type="entry name" value="CYTOCHROME C OXIDASE SUBUNIT VIIC"/>
    <property type="match status" value="1"/>
</dbReference>
<dbReference type="Pfam" id="PF02935">
    <property type="entry name" value="COX7C"/>
    <property type="match status" value="1"/>
</dbReference>
<dbReference type="SUPFAM" id="SSF81427">
    <property type="entry name" value="Mitochondrial cytochrome c oxidase subunit VIIc (aka VIIIa)"/>
    <property type="match status" value="1"/>
</dbReference>
<accession>Q8SPI1</accession>
<name>COX7C_MACFA</name>
<reference key="1">
    <citation type="journal article" date="2002" name="Genomics">
        <title>Search for genes positively selected during primate evolution by 5'-end-sequence screening of cynomolgus monkey cDNAs.</title>
        <authorList>
            <person name="Osada N."/>
            <person name="Kusuda J."/>
            <person name="Hirata M."/>
            <person name="Tanuma R."/>
            <person name="Hida M."/>
            <person name="Sugano S."/>
            <person name="Hirai M."/>
            <person name="Hashimoto K."/>
        </authorList>
    </citation>
    <scope>NUCLEOTIDE SEQUENCE [LARGE SCALE MRNA]</scope>
    <source>
        <tissue>Brain cortex</tissue>
    </source>
</reference>
<organism>
    <name type="scientific">Macaca fascicularis</name>
    <name type="common">Crab-eating macaque</name>
    <name type="synonym">Cynomolgus monkey</name>
    <dbReference type="NCBI Taxonomy" id="9541"/>
    <lineage>
        <taxon>Eukaryota</taxon>
        <taxon>Metazoa</taxon>
        <taxon>Chordata</taxon>
        <taxon>Craniata</taxon>
        <taxon>Vertebrata</taxon>
        <taxon>Euteleostomi</taxon>
        <taxon>Mammalia</taxon>
        <taxon>Eutheria</taxon>
        <taxon>Euarchontoglires</taxon>
        <taxon>Primates</taxon>
        <taxon>Haplorrhini</taxon>
        <taxon>Catarrhini</taxon>
        <taxon>Cercopithecidae</taxon>
        <taxon>Cercopithecinae</taxon>
        <taxon>Macaca</taxon>
    </lineage>
</organism>
<keyword id="KW-0007">Acetylation</keyword>
<keyword id="KW-0472">Membrane</keyword>
<keyword id="KW-0496">Mitochondrion</keyword>
<keyword id="KW-0999">Mitochondrion inner membrane</keyword>
<keyword id="KW-1185">Reference proteome</keyword>
<keyword id="KW-0809">Transit peptide</keyword>
<keyword id="KW-0812">Transmembrane</keyword>
<keyword id="KW-1133">Transmembrane helix</keyword>
<feature type="transit peptide" description="Mitochondrion" evidence="1">
    <location>
        <begin position="1"/>
        <end position="16"/>
    </location>
</feature>
<feature type="chain" id="PRO_0000006165" description="Cytochrome c oxidase subunit 7C, mitochondrial">
    <location>
        <begin position="17"/>
        <end position="63"/>
    </location>
</feature>
<feature type="topological domain" description="Mitochondrial matrix" evidence="1">
    <location>
        <begin position="17"/>
        <end position="33"/>
    </location>
</feature>
<feature type="transmembrane region" description="Helical" evidence="1">
    <location>
        <begin position="34"/>
        <end position="60"/>
    </location>
</feature>
<feature type="topological domain" description="Mitochondrial intermembrane" evidence="1">
    <location>
        <begin position="61"/>
        <end position="63"/>
    </location>
</feature>
<feature type="modified residue" description="N6-acetyllysine; alternate" evidence="4">
    <location>
        <position position="25"/>
    </location>
</feature>
<feature type="modified residue" description="N6-succinyllysine; alternate" evidence="4">
    <location>
        <position position="25"/>
    </location>
</feature>
<evidence type="ECO:0000250" key="1">
    <source>
        <dbReference type="UniProtKB" id="P00430"/>
    </source>
</evidence>
<evidence type="ECO:0000250" key="2">
    <source>
        <dbReference type="UniProtKB" id="P04039"/>
    </source>
</evidence>
<evidence type="ECO:0000250" key="3">
    <source>
        <dbReference type="UniProtKB" id="P15954"/>
    </source>
</evidence>
<evidence type="ECO:0000250" key="4">
    <source>
        <dbReference type="UniProtKB" id="P17665"/>
    </source>
</evidence>
<evidence type="ECO:0000305" key="5"/>
<gene>
    <name type="primary">COX7C</name>
    <name type="ORF">QccE-13962</name>
</gene>
<proteinExistence type="inferred from homology"/>